<proteinExistence type="inferred from homology"/>
<comment type="function">
    <text>This major extracellular protein may be involved in the invasion of non-professional phagocytic cells by Listeria.</text>
</comment>
<comment type="domain">
    <text>LysM domains are thought to be involved in peptidoglycan binding.</text>
</comment>
<comment type="similarity">
    <text evidence="4 6">Belongs to the peptidase C40 family.</text>
</comment>
<gene>
    <name type="primary">iap</name>
</gene>
<keyword id="KW-0378">Hydrolase</keyword>
<keyword id="KW-0645">Protease</keyword>
<keyword id="KW-0677">Repeat</keyword>
<keyword id="KW-0732">Signal</keyword>
<keyword id="KW-0788">Thiol protease</keyword>
<name>P60_LISGR</name>
<sequence length="511" mass="53181">MNMKKATIVSAAGIAVTAFAAPSVVSANTVVVASGDTLWGIASKTGTTVDQLKQLNKLDSDRIVPGQKLTIKEVAAQKVEKSVSATWLNVRHAPDANEKILTSLKGRTVVKVESSEANGWNKISFDNGKTGYVNGKYLSDAKVAAPVVTKAVTHKAEAKVAATSTHAVKVDTNASTYKVKSGDTIWALSVKYGVPVQKLIEWNNLSSSSIYVGQTIAVKEAAAKAAPTTVKQAAPAKVAPKQEVKQTAPAKQEQAKPAAKETVKPAVSKPKAATPAPTAKPAVEQKASTPAVDTNAATYKVQNGDSLGKIASLFKVSVADLTNWNNLNATITIYAGQELSVKASAAKPKPAAPAKPAVSKPATSTPAKVTPTNTTNNSTPTTNVNNNTSQSSSASFSALYAEAKKHLGKPYTWGARGPSTFDCSGFTSYVFNQVGLSLSGNSATQYANSTKISESQAQPGDLVFFNYGSGIAHVGIYIGGGQMIDAQDNGVSIDNIHGNGWGQYLVGFGRV</sequence>
<dbReference type="EC" id="3.4.-.-"/>
<dbReference type="EMBL" id="M80352">
    <property type="protein sequence ID" value="AAA25285.1"/>
    <property type="molecule type" value="Genomic_DNA"/>
</dbReference>
<dbReference type="SMR" id="Q01835"/>
<dbReference type="GO" id="GO:0008234">
    <property type="term" value="F:cysteine-type peptidase activity"/>
    <property type="evidence" value="ECO:0007669"/>
    <property type="project" value="UniProtKB-KW"/>
</dbReference>
<dbReference type="GO" id="GO:0006508">
    <property type="term" value="P:proteolysis"/>
    <property type="evidence" value="ECO:0007669"/>
    <property type="project" value="UniProtKB-KW"/>
</dbReference>
<dbReference type="CDD" id="cd00118">
    <property type="entry name" value="LysM"/>
    <property type="match status" value="3"/>
</dbReference>
<dbReference type="Gene3D" id="3.90.1720.10">
    <property type="entry name" value="endopeptidase domain like (from Nostoc punctiforme)"/>
    <property type="match status" value="1"/>
</dbReference>
<dbReference type="Gene3D" id="3.10.350.10">
    <property type="entry name" value="LysM domain"/>
    <property type="match status" value="3"/>
</dbReference>
<dbReference type="Gene3D" id="2.30.30.40">
    <property type="entry name" value="SH3 Domains"/>
    <property type="match status" value="1"/>
</dbReference>
<dbReference type="InterPro" id="IPR018392">
    <property type="entry name" value="LysM_dom"/>
</dbReference>
<dbReference type="InterPro" id="IPR036779">
    <property type="entry name" value="LysM_dom_sf"/>
</dbReference>
<dbReference type="InterPro" id="IPR000064">
    <property type="entry name" value="NLP_P60_dom"/>
</dbReference>
<dbReference type="InterPro" id="IPR038765">
    <property type="entry name" value="Papain-like_cys_pep_sf"/>
</dbReference>
<dbReference type="InterPro" id="IPR051202">
    <property type="entry name" value="Peptidase_C40"/>
</dbReference>
<dbReference type="InterPro" id="IPR003646">
    <property type="entry name" value="SH3-like_bac-type"/>
</dbReference>
<dbReference type="PANTHER" id="PTHR47053">
    <property type="entry name" value="MUREIN DD-ENDOPEPTIDASE MEPH-RELATED"/>
    <property type="match status" value="1"/>
</dbReference>
<dbReference type="PANTHER" id="PTHR47053:SF1">
    <property type="entry name" value="MUREIN DD-ENDOPEPTIDASE MEPH-RELATED"/>
    <property type="match status" value="1"/>
</dbReference>
<dbReference type="Pfam" id="PF01476">
    <property type="entry name" value="LysM"/>
    <property type="match status" value="3"/>
</dbReference>
<dbReference type="Pfam" id="PF00877">
    <property type="entry name" value="NLPC_P60"/>
    <property type="match status" value="1"/>
</dbReference>
<dbReference type="Pfam" id="PF08239">
    <property type="entry name" value="SH3_3"/>
    <property type="match status" value="1"/>
</dbReference>
<dbReference type="SMART" id="SM00257">
    <property type="entry name" value="LysM"/>
    <property type="match status" value="3"/>
</dbReference>
<dbReference type="SMART" id="SM00287">
    <property type="entry name" value="SH3b"/>
    <property type="match status" value="1"/>
</dbReference>
<dbReference type="SUPFAM" id="SSF54001">
    <property type="entry name" value="Cysteine proteinases"/>
    <property type="match status" value="1"/>
</dbReference>
<dbReference type="SUPFAM" id="SSF54106">
    <property type="entry name" value="LysM domain"/>
    <property type="match status" value="3"/>
</dbReference>
<dbReference type="PROSITE" id="PS51782">
    <property type="entry name" value="LYSM"/>
    <property type="match status" value="3"/>
</dbReference>
<dbReference type="PROSITE" id="PS51935">
    <property type="entry name" value="NLPC_P60"/>
    <property type="match status" value="1"/>
</dbReference>
<dbReference type="PROSITE" id="PS51781">
    <property type="entry name" value="SH3B"/>
    <property type="match status" value="1"/>
</dbReference>
<feature type="signal peptide" evidence="1">
    <location>
        <begin position="1"/>
        <end position="27"/>
    </location>
</feature>
<feature type="chain" id="PRO_0000019757" description="Probable endopeptidase p60">
    <location>
        <begin position="28"/>
        <end position="511"/>
    </location>
</feature>
<feature type="domain" description="LysM 1" evidence="3">
    <location>
        <begin position="28"/>
        <end position="71"/>
    </location>
</feature>
<feature type="domain" description="SH3b" evidence="2">
    <location>
        <begin position="78"/>
        <end position="142"/>
    </location>
</feature>
<feature type="domain" description="LysM 2" evidence="3">
    <location>
        <begin position="175"/>
        <end position="218"/>
    </location>
</feature>
<feature type="domain" description="LysM 3" evidence="3">
    <location>
        <begin position="297"/>
        <end position="341"/>
    </location>
</feature>
<feature type="domain" description="NlpC/P60" evidence="4">
    <location>
        <begin position="393"/>
        <end position="511"/>
    </location>
</feature>
<feature type="region of interest" description="Disordered" evidence="5">
    <location>
        <begin position="229"/>
        <end position="291"/>
    </location>
</feature>
<feature type="region of interest" description="Disordered" evidence="5">
    <location>
        <begin position="347"/>
        <end position="390"/>
    </location>
</feature>
<feature type="compositionally biased region" description="Low complexity" evidence="5">
    <location>
        <begin position="229"/>
        <end position="257"/>
    </location>
</feature>
<feature type="compositionally biased region" description="Low complexity" evidence="5">
    <location>
        <begin position="264"/>
        <end position="282"/>
    </location>
</feature>
<feature type="compositionally biased region" description="Low complexity" evidence="5">
    <location>
        <begin position="347"/>
        <end position="362"/>
    </location>
</feature>
<feature type="compositionally biased region" description="Low complexity" evidence="5">
    <location>
        <begin position="372"/>
        <end position="390"/>
    </location>
</feature>
<feature type="active site" description="Nucleophile" evidence="4">
    <location>
        <position position="423"/>
    </location>
</feature>
<feature type="active site" description="Proton acceptor" evidence="4">
    <location>
        <position position="473"/>
    </location>
</feature>
<feature type="active site" evidence="4">
    <location>
        <position position="485"/>
    </location>
</feature>
<reference key="1">
    <citation type="journal article" date="1992" name="Appl. Environ. Microbiol.">
        <title>The homologous and heterologous regions within the iap gene allow genus- and species-specific identification of Listeria spp. by polymerase chain reaction.</title>
        <authorList>
            <person name="Bubert A."/>
            <person name="Koehler S."/>
            <person name="Goebel W."/>
        </authorList>
    </citation>
    <scope>NUCLEOTIDE SEQUENCE [GENOMIC DNA]</scope>
</reference>
<reference key="2">
    <citation type="journal article" date="1992" name="J. Bacteriol.">
        <title>Structural and functional properties of the p60 proteins from different Listeria species.</title>
        <authorList>
            <person name="Bubert A."/>
            <person name="Kuhn M."/>
            <person name="Goebel W."/>
            <person name="Koehler S."/>
        </authorList>
    </citation>
    <scope>DISCUSSION OF SEQUENCE</scope>
</reference>
<accession>Q01835</accession>
<organism>
    <name type="scientific">Listeria grayi</name>
    <name type="common">Listeria murrayi</name>
    <dbReference type="NCBI Taxonomy" id="1641"/>
    <lineage>
        <taxon>Bacteria</taxon>
        <taxon>Bacillati</taxon>
        <taxon>Bacillota</taxon>
        <taxon>Bacilli</taxon>
        <taxon>Bacillales</taxon>
        <taxon>Listeriaceae</taxon>
        <taxon>Listeria</taxon>
    </lineage>
</organism>
<evidence type="ECO:0000250" key="1"/>
<evidence type="ECO:0000255" key="2">
    <source>
        <dbReference type="PROSITE-ProRule" id="PRU01117"/>
    </source>
</evidence>
<evidence type="ECO:0000255" key="3">
    <source>
        <dbReference type="PROSITE-ProRule" id="PRU01118"/>
    </source>
</evidence>
<evidence type="ECO:0000255" key="4">
    <source>
        <dbReference type="PROSITE-ProRule" id="PRU01284"/>
    </source>
</evidence>
<evidence type="ECO:0000256" key="5">
    <source>
        <dbReference type="SAM" id="MobiDB-lite"/>
    </source>
</evidence>
<evidence type="ECO:0000305" key="6"/>
<protein>
    <recommendedName>
        <fullName>Probable endopeptidase p60</fullName>
        <ecNumber>3.4.-.-</ecNumber>
    </recommendedName>
    <alternativeName>
        <fullName>Invasion-associated protein p60</fullName>
    </alternativeName>
</protein>